<evidence type="ECO:0000255" key="1">
    <source>
        <dbReference type="HAMAP-Rule" id="MF_01201"/>
    </source>
</evidence>
<reference key="1">
    <citation type="submission" date="2006-08" db="EMBL/GenBank/DDBJ databases">
        <title>Complete sequence of Shewanella sp. MR-4.</title>
        <authorList>
            <consortium name="US DOE Joint Genome Institute"/>
            <person name="Copeland A."/>
            <person name="Lucas S."/>
            <person name="Lapidus A."/>
            <person name="Barry K."/>
            <person name="Detter J.C."/>
            <person name="Glavina del Rio T."/>
            <person name="Hammon N."/>
            <person name="Israni S."/>
            <person name="Dalin E."/>
            <person name="Tice H."/>
            <person name="Pitluck S."/>
            <person name="Kiss H."/>
            <person name="Brettin T."/>
            <person name="Bruce D."/>
            <person name="Han C."/>
            <person name="Tapia R."/>
            <person name="Gilna P."/>
            <person name="Schmutz J."/>
            <person name="Larimer F."/>
            <person name="Land M."/>
            <person name="Hauser L."/>
            <person name="Kyrpides N."/>
            <person name="Mikhailova N."/>
            <person name="Nealson K."/>
            <person name="Konstantinidis K."/>
            <person name="Klappenbach J."/>
            <person name="Tiedje J."/>
            <person name="Richardson P."/>
        </authorList>
    </citation>
    <scope>NUCLEOTIDE SEQUENCE [LARGE SCALE GENOMIC DNA]</scope>
    <source>
        <strain>MR-4</strain>
    </source>
</reference>
<gene>
    <name type="primary">alr</name>
    <name type="ordered locus">Shewmr4_3247</name>
</gene>
<feature type="chain" id="PRO_1000164622" description="Alanine racemase">
    <location>
        <begin position="1"/>
        <end position="358"/>
    </location>
</feature>
<feature type="active site" description="Proton acceptor; specific for D-alanine" evidence="1">
    <location>
        <position position="35"/>
    </location>
</feature>
<feature type="active site" description="Proton acceptor; specific for L-alanine" evidence="1">
    <location>
        <position position="255"/>
    </location>
</feature>
<feature type="binding site" evidence="1">
    <location>
        <position position="130"/>
    </location>
    <ligand>
        <name>substrate</name>
    </ligand>
</feature>
<feature type="binding site" evidence="1">
    <location>
        <position position="303"/>
    </location>
    <ligand>
        <name>substrate</name>
    </ligand>
</feature>
<feature type="modified residue" description="N6-(pyridoxal phosphate)lysine" evidence="1">
    <location>
        <position position="35"/>
    </location>
</feature>
<dbReference type="EC" id="5.1.1.1" evidence="1"/>
<dbReference type="EMBL" id="CP000446">
    <property type="protein sequence ID" value="ABI40315.1"/>
    <property type="molecule type" value="Genomic_DNA"/>
</dbReference>
<dbReference type="RefSeq" id="WP_011623986.1">
    <property type="nucleotide sequence ID" value="NC_008321.1"/>
</dbReference>
<dbReference type="SMR" id="Q0HF52"/>
<dbReference type="KEGG" id="she:Shewmr4_3247"/>
<dbReference type="HOGENOM" id="CLU_028393_1_0_6"/>
<dbReference type="UniPathway" id="UPA00042">
    <property type="reaction ID" value="UER00497"/>
</dbReference>
<dbReference type="GO" id="GO:0005829">
    <property type="term" value="C:cytosol"/>
    <property type="evidence" value="ECO:0007669"/>
    <property type="project" value="TreeGrafter"/>
</dbReference>
<dbReference type="GO" id="GO:0008784">
    <property type="term" value="F:alanine racemase activity"/>
    <property type="evidence" value="ECO:0007669"/>
    <property type="project" value="UniProtKB-UniRule"/>
</dbReference>
<dbReference type="GO" id="GO:0030170">
    <property type="term" value="F:pyridoxal phosphate binding"/>
    <property type="evidence" value="ECO:0007669"/>
    <property type="project" value="UniProtKB-UniRule"/>
</dbReference>
<dbReference type="GO" id="GO:0030632">
    <property type="term" value="P:D-alanine biosynthetic process"/>
    <property type="evidence" value="ECO:0007669"/>
    <property type="project" value="UniProtKB-UniRule"/>
</dbReference>
<dbReference type="CDD" id="cd06827">
    <property type="entry name" value="PLPDE_III_AR_proteobact"/>
    <property type="match status" value="1"/>
</dbReference>
<dbReference type="FunFam" id="2.40.37.10:FF:000002">
    <property type="entry name" value="Alanine racemase"/>
    <property type="match status" value="1"/>
</dbReference>
<dbReference type="FunFam" id="3.20.20.10:FF:000002">
    <property type="entry name" value="Alanine racemase"/>
    <property type="match status" value="1"/>
</dbReference>
<dbReference type="Gene3D" id="3.20.20.10">
    <property type="entry name" value="Alanine racemase"/>
    <property type="match status" value="1"/>
</dbReference>
<dbReference type="Gene3D" id="2.40.37.10">
    <property type="entry name" value="Lyase, Ornithine Decarboxylase, Chain A, domain 1"/>
    <property type="match status" value="1"/>
</dbReference>
<dbReference type="HAMAP" id="MF_01201">
    <property type="entry name" value="Ala_racemase"/>
    <property type="match status" value="1"/>
</dbReference>
<dbReference type="InterPro" id="IPR000821">
    <property type="entry name" value="Ala_racemase"/>
</dbReference>
<dbReference type="InterPro" id="IPR009006">
    <property type="entry name" value="Ala_racemase/Decarboxylase_C"/>
</dbReference>
<dbReference type="InterPro" id="IPR011079">
    <property type="entry name" value="Ala_racemase_C"/>
</dbReference>
<dbReference type="InterPro" id="IPR001608">
    <property type="entry name" value="Ala_racemase_N"/>
</dbReference>
<dbReference type="InterPro" id="IPR020622">
    <property type="entry name" value="Ala_racemase_pyridoxalP-BS"/>
</dbReference>
<dbReference type="InterPro" id="IPR029066">
    <property type="entry name" value="PLP-binding_barrel"/>
</dbReference>
<dbReference type="NCBIfam" id="TIGR00492">
    <property type="entry name" value="alr"/>
    <property type="match status" value="1"/>
</dbReference>
<dbReference type="PANTHER" id="PTHR30511">
    <property type="entry name" value="ALANINE RACEMASE"/>
    <property type="match status" value="1"/>
</dbReference>
<dbReference type="PANTHER" id="PTHR30511:SF4">
    <property type="entry name" value="ALANINE RACEMASE, BIOSYNTHETIC"/>
    <property type="match status" value="1"/>
</dbReference>
<dbReference type="Pfam" id="PF00842">
    <property type="entry name" value="Ala_racemase_C"/>
    <property type="match status" value="1"/>
</dbReference>
<dbReference type="Pfam" id="PF01168">
    <property type="entry name" value="Ala_racemase_N"/>
    <property type="match status" value="1"/>
</dbReference>
<dbReference type="PRINTS" id="PR00992">
    <property type="entry name" value="ALARACEMASE"/>
</dbReference>
<dbReference type="SMART" id="SM01005">
    <property type="entry name" value="Ala_racemase_C"/>
    <property type="match status" value="1"/>
</dbReference>
<dbReference type="SUPFAM" id="SSF50621">
    <property type="entry name" value="Alanine racemase C-terminal domain-like"/>
    <property type="match status" value="1"/>
</dbReference>
<dbReference type="SUPFAM" id="SSF51419">
    <property type="entry name" value="PLP-binding barrel"/>
    <property type="match status" value="1"/>
</dbReference>
<dbReference type="PROSITE" id="PS00395">
    <property type="entry name" value="ALANINE_RACEMASE"/>
    <property type="match status" value="1"/>
</dbReference>
<accession>Q0HF52</accession>
<proteinExistence type="inferred from homology"/>
<sequence length="358" mass="38705">MKPFPRAEISSSALQNNLAVLRQQASRSQVMAVVKANGYGHGLLNVANCLHTADGFGLARLEEALELRAGGVKARLLLLEGFFRSTDLPLLVAHDIDTVVHHESQIEMLEQATLSKPVTVWLKVDSGMHRLGVTPEQFAQVYARLTACDNVAKPIHLMTHFACADEPENHYTQVQMQTFNQLTADLPGFRTLANSAGALYWPKSQGDWIRPGIALYGVSPVTGDCGANHGLIPAMNLVSRLIAVRDHKAGQPVGYGCYWTAKQDTRLGVVAIGYGDGYPRNAPEGTPVWVNGRRVPIVGRVSMDMLTVDLGADATDLVGDEALLWGAALPVEEVAEHIGTIAYELVTKLTPRVAVCLA</sequence>
<organism>
    <name type="scientific">Shewanella sp. (strain MR-4)</name>
    <dbReference type="NCBI Taxonomy" id="60480"/>
    <lineage>
        <taxon>Bacteria</taxon>
        <taxon>Pseudomonadati</taxon>
        <taxon>Pseudomonadota</taxon>
        <taxon>Gammaproteobacteria</taxon>
        <taxon>Alteromonadales</taxon>
        <taxon>Shewanellaceae</taxon>
        <taxon>Shewanella</taxon>
    </lineage>
</organism>
<keyword id="KW-0413">Isomerase</keyword>
<keyword id="KW-0663">Pyridoxal phosphate</keyword>
<name>ALR_SHESM</name>
<comment type="function">
    <text evidence="1">Catalyzes the interconversion of L-alanine and D-alanine. May also act on other amino acids.</text>
</comment>
<comment type="catalytic activity">
    <reaction evidence="1">
        <text>L-alanine = D-alanine</text>
        <dbReference type="Rhea" id="RHEA:20249"/>
        <dbReference type="ChEBI" id="CHEBI:57416"/>
        <dbReference type="ChEBI" id="CHEBI:57972"/>
        <dbReference type="EC" id="5.1.1.1"/>
    </reaction>
</comment>
<comment type="cofactor">
    <cofactor evidence="1">
        <name>pyridoxal 5'-phosphate</name>
        <dbReference type="ChEBI" id="CHEBI:597326"/>
    </cofactor>
</comment>
<comment type="pathway">
    <text evidence="1">Amino-acid biosynthesis; D-alanine biosynthesis; D-alanine from L-alanine: step 1/1.</text>
</comment>
<comment type="similarity">
    <text evidence="1">Belongs to the alanine racemase family.</text>
</comment>
<protein>
    <recommendedName>
        <fullName evidence="1">Alanine racemase</fullName>
        <ecNumber evidence="1">5.1.1.1</ecNumber>
    </recommendedName>
</protein>